<reference key="1">
    <citation type="journal article" date="2009" name="PLoS Genet.">
        <title>Organised genome dynamics in the Escherichia coli species results in highly diverse adaptive paths.</title>
        <authorList>
            <person name="Touchon M."/>
            <person name="Hoede C."/>
            <person name="Tenaillon O."/>
            <person name="Barbe V."/>
            <person name="Baeriswyl S."/>
            <person name="Bidet P."/>
            <person name="Bingen E."/>
            <person name="Bonacorsi S."/>
            <person name="Bouchier C."/>
            <person name="Bouvet O."/>
            <person name="Calteau A."/>
            <person name="Chiapello H."/>
            <person name="Clermont O."/>
            <person name="Cruveiller S."/>
            <person name="Danchin A."/>
            <person name="Diard M."/>
            <person name="Dossat C."/>
            <person name="Karoui M.E."/>
            <person name="Frapy E."/>
            <person name="Garry L."/>
            <person name="Ghigo J.M."/>
            <person name="Gilles A.M."/>
            <person name="Johnson J."/>
            <person name="Le Bouguenec C."/>
            <person name="Lescat M."/>
            <person name="Mangenot S."/>
            <person name="Martinez-Jehanne V."/>
            <person name="Matic I."/>
            <person name="Nassif X."/>
            <person name="Oztas S."/>
            <person name="Petit M.A."/>
            <person name="Pichon C."/>
            <person name="Rouy Z."/>
            <person name="Ruf C.S."/>
            <person name="Schneider D."/>
            <person name="Tourret J."/>
            <person name="Vacherie B."/>
            <person name="Vallenet D."/>
            <person name="Medigue C."/>
            <person name="Rocha E.P.C."/>
            <person name="Denamur E."/>
        </authorList>
    </citation>
    <scope>NUCLEOTIDE SEQUENCE [LARGE SCALE GENOMIC DNA]</scope>
    <source>
        <strain>IAI1</strain>
    </source>
</reference>
<evidence type="ECO:0000255" key="1">
    <source>
        <dbReference type="HAMAP-Rule" id="MF_00093"/>
    </source>
</evidence>
<evidence type="ECO:0000256" key="2">
    <source>
        <dbReference type="SAM" id="MobiDB-lite"/>
    </source>
</evidence>
<organism>
    <name type="scientific">Escherichia coli O8 (strain IAI1)</name>
    <dbReference type="NCBI Taxonomy" id="585034"/>
    <lineage>
        <taxon>Bacteria</taxon>
        <taxon>Pseudomonadati</taxon>
        <taxon>Pseudomonadota</taxon>
        <taxon>Gammaproteobacteria</taxon>
        <taxon>Enterobacterales</taxon>
        <taxon>Enterobacteriaceae</taxon>
        <taxon>Escherichia</taxon>
    </lineage>
</organism>
<feature type="chain" id="PRO_1000117240" description="Peptide chain release factor 1">
    <location>
        <begin position="1"/>
        <end position="360"/>
    </location>
</feature>
<feature type="region of interest" description="Disordered" evidence="2">
    <location>
        <begin position="284"/>
        <end position="313"/>
    </location>
</feature>
<feature type="modified residue" description="N5-methylglutamine" evidence="1">
    <location>
        <position position="235"/>
    </location>
</feature>
<accession>B7LXC6</accession>
<comment type="function">
    <text evidence="1">Peptide chain release factor 1 directs the termination of translation in response to the peptide chain termination codons UAG and UAA.</text>
</comment>
<comment type="subcellular location">
    <subcellularLocation>
        <location evidence="1">Cytoplasm</location>
    </subcellularLocation>
</comment>
<comment type="PTM">
    <text evidence="1">Methylated by PrmC. Methylation increases the termination efficiency of RF1.</text>
</comment>
<comment type="similarity">
    <text evidence="1">Belongs to the prokaryotic/mitochondrial release factor family.</text>
</comment>
<protein>
    <recommendedName>
        <fullName evidence="1">Peptide chain release factor 1</fullName>
        <shortName evidence="1">RF-1</shortName>
    </recommendedName>
</protein>
<proteinExistence type="inferred from homology"/>
<name>RF1_ECO8A</name>
<keyword id="KW-0963">Cytoplasm</keyword>
<keyword id="KW-0488">Methylation</keyword>
<keyword id="KW-0648">Protein biosynthesis</keyword>
<sequence>MKPSIVAKLEALHERHEEVQALLGDAQTIADQERFRALSREYAQLSDVSRCFTDWQQVQEDIETAQMMLDDPEMREMAQDELREAKEKSEQLEQQLQVLLLPKDPDDERNAFLEVRAGTGGDEAALFAGDLFRMYSRYAEARRWRVEIMSASEGEHGGYKEIIAKISGDGVYGRLKFESGGHRVQRVPATESQGRIHTSACTVAVMPELPDAELPDINPADLRIDTFRSSGAGGQHVNTTDSAIRITHLPTGIVVECQDERSQHKNKAKALSVLGARIHAAEMAKRQQAEASTRRNLLGSGDRSDRNRTYNFPQGRVTDHRINLTLYRLDEVMEGKLDMLIEPIIQEHQADQLAALSEQE</sequence>
<dbReference type="EMBL" id="CU928160">
    <property type="protein sequence ID" value="CAQ98091.1"/>
    <property type="molecule type" value="Genomic_DNA"/>
</dbReference>
<dbReference type="RefSeq" id="WP_000804726.1">
    <property type="nucleotide sequence ID" value="NC_011741.1"/>
</dbReference>
<dbReference type="SMR" id="B7LXC6"/>
<dbReference type="GeneID" id="93775276"/>
<dbReference type="KEGG" id="ecr:ECIAI1_1232"/>
<dbReference type="HOGENOM" id="CLU_036856_0_1_6"/>
<dbReference type="GO" id="GO:0005737">
    <property type="term" value="C:cytoplasm"/>
    <property type="evidence" value="ECO:0007669"/>
    <property type="project" value="UniProtKB-SubCell"/>
</dbReference>
<dbReference type="GO" id="GO:0016149">
    <property type="term" value="F:translation release factor activity, codon specific"/>
    <property type="evidence" value="ECO:0007669"/>
    <property type="project" value="UniProtKB-UniRule"/>
</dbReference>
<dbReference type="FunFam" id="3.30.160.20:FF:000004">
    <property type="entry name" value="Peptide chain release factor 1"/>
    <property type="match status" value="1"/>
</dbReference>
<dbReference type="FunFam" id="3.30.70.1660:FF:000002">
    <property type="entry name" value="Peptide chain release factor 1"/>
    <property type="match status" value="1"/>
</dbReference>
<dbReference type="FunFam" id="3.30.70.1660:FF:000004">
    <property type="entry name" value="Peptide chain release factor 1"/>
    <property type="match status" value="1"/>
</dbReference>
<dbReference type="Gene3D" id="3.30.160.20">
    <property type="match status" value="1"/>
</dbReference>
<dbReference type="Gene3D" id="3.30.70.1660">
    <property type="match status" value="1"/>
</dbReference>
<dbReference type="Gene3D" id="6.10.140.1950">
    <property type="match status" value="1"/>
</dbReference>
<dbReference type="HAMAP" id="MF_00093">
    <property type="entry name" value="Rel_fac_1"/>
    <property type="match status" value="1"/>
</dbReference>
<dbReference type="InterPro" id="IPR005139">
    <property type="entry name" value="PCRF"/>
</dbReference>
<dbReference type="InterPro" id="IPR000352">
    <property type="entry name" value="Pep_chain_release_fac_I"/>
</dbReference>
<dbReference type="InterPro" id="IPR045853">
    <property type="entry name" value="Pep_chain_release_fac_I_sf"/>
</dbReference>
<dbReference type="InterPro" id="IPR050057">
    <property type="entry name" value="Prokaryotic/Mito_RF"/>
</dbReference>
<dbReference type="InterPro" id="IPR004373">
    <property type="entry name" value="RF-1"/>
</dbReference>
<dbReference type="NCBIfam" id="TIGR00019">
    <property type="entry name" value="prfA"/>
    <property type="match status" value="1"/>
</dbReference>
<dbReference type="NCBIfam" id="NF001859">
    <property type="entry name" value="PRK00591.1"/>
    <property type="match status" value="1"/>
</dbReference>
<dbReference type="PANTHER" id="PTHR43804">
    <property type="entry name" value="LD18447P"/>
    <property type="match status" value="1"/>
</dbReference>
<dbReference type="PANTHER" id="PTHR43804:SF7">
    <property type="entry name" value="LD18447P"/>
    <property type="match status" value="1"/>
</dbReference>
<dbReference type="Pfam" id="PF03462">
    <property type="entry name" value="PCRF"/>
    <property type="match status" value="1"/>
</dbReference>
<dbReference type="Pfam" id="PF00472">
    <property type="entry name" value="RF-1"/>
    <property type="match status" value="1"/>
</dbReference>
<dbReference type="SMART" id="SM00937">
    <property type="entry name" value="PCRF"/>
    <property type="match status" value="1"/>
</dbReference>
<dbReference type="SUPFAM" id="SSF75620">
    <property type="entry name" value="Release factor"/>
    <property type="match status" value="1"/>
</dbReference>
<dbReference type="PROSITE" id="PS00745">
    <property type="entry name" value="RF_PROK_I"/>
    <property type="match status" value="1"/>
</dbReference>
<gene>
    <name evidence="1" type="primary">prfA</name>
    <name type="ordered locus">ECIAI1_1232</name>
</gene>